<proteinExistence type="inferred from homology"/>
<protein>
    <recommendedName>
        <fullName evidence="1">UPF0261 protein mlr3387</fullName>
    </recommendedName>
</protein>
<feature type="chain" id="PRO_0000220212" description="UPF0261 protein mlr3387">
    <location>
        <begin position="1"/>
        <end position="397"/>
    </location>
</feature>
<comment type="similarity">
    <text evidence="1">Belongs to the UPF0261 family.</text>
</comment>
<sequence length="397" mass="41531">MKRIYVVGTADTKGEELAFLADAIAATGAAVSRVDVGTRDATIPVDISANDIAGHHPGGRDAVLGGNDRGAAVAAMGVAFARFAQSRNDIAAMIGIGGGGGTSIVTSGMRALPLGLPKIMVSTLASGDTAPYVDVSDIIMMPSVTDMAGLNRLSRVVLHNAAQAIAGMAARPAPPPDGKPSIGLTMFGVTTPCVTTIADALRSTYDCMVFHATGTGGRSMEKLADSGLLSGVIDITTTEVCDLLLGGVLPATEDRFGAIARTGLPYVGSVGALDMVNFWAPSTVPERYRGRLFYEHNPNVTLMRTSADECRAIGEWIGTRLALCDGPVHFLIPEKGVSALDIEGGTFFDREADAVLFEAIERTIKPNANRRVTRLPLHINDPEFAKAVAAFLDIARH</sequence>
<reference key="1">
    <citation type="journal article" date="2000" name="DNA Res.">
        <title>Complete genome structure of the nitrogen-fixing symbiotic bacterium Mesorhizobium loti.</title>
        <authorList>
            <person name="Kaneko T."/>
            <person name="Nakamura Y."/>
            <person name="Sato S."/>
            <person name="Asamizu E."/>
            <person name="Kato T."/>
            <person name="Sasamoto S."/>
            <person name="Watanabe A."/>
            <person name="Idesawa K."/>
            <person name="Ishikawa A."/>
            <person name="Kawashima K."/>
            <person name="Kimura T."/>
            <person name="Kishida Y."/>
            <person name="Kiyokawa C."/>
            <person name="Kohara M."/>
            <person name="Matsumoto M."/>
            <person name="Matsuno A."/>
            <person name="Mochizuki Y."/>
            <person name="Nakayama S."/>
            <person name="Nakazaki N."/>
            <person name="Shimpo S."/>
            <person name="Sugimoto M."/>
            <person name="Takeuchi C."/>
            <person name="Yamada M."/>
            <person name="Tabata S."/>
        </authorList>
    </citation>
    <scope>NUCLEOTIDE SEQUENCE [LARGE SCALE GENOMIC DNA]</scope>
    <source>
        <strain>LMG 29417 / CECT 9101 / MAFF 303099</strain>
    </source>
</reference>
<name>Y3387_RHILO</name>
<dbReference type="EMBL" id="BA000012">
    <property type="protein sequence ID" value="BAB50290.1"/>
    <property type="molecule type" value="Genomic_DNA"/>
</dbReference>
<dbReference type="RefSeq" id="WP_010911636.1">
    <property type="nucleotide sequence ID" value="NC_002678.2"/>
</dbReference>
<dbReference type="SMR" id="Q98GC6"/>
<dbReference type="KEGG" id="mlo:mlr3387"/>
<dbReference type="PATRIC" id="fig|266835.9.peg.2698"/>
<dbReference type="eggNOG" id="COG5441">
    <property type="taxonomic scope" value="Bacteria"/>
</dbReference>
<dbReference type="HOGENOM" id="CLU_036813_1_0_5"/>
<dbReference type="Proteomes" id="UP000000552">
    <property type="component" value="Chromosome"/>
</dbReference>
<dbReference type="CDD" id="cd15488">
    <property type="entry name" value="Tm-1-like"/>
    <property type="match status" value="1"/>
</dbReference>
<dbReference type="Gene3D" id="3.40.50.12030">
    <property type="entry name" value="Uncharacterised protein family UPF0261, NC domain"/>
    <property type="match status" value="1"/>
</dbReference>
<dbReference type="Gene3D" id="3.40.50.12020">
    <property type="entry name" value="Uncharacterised protein family UPF0261, NN domain"/>
    <property type="match status" value="1"/>
</dbReference>
<dbReference type="HAMAP" id="MF_00677">
    <property type="entry name" value="UPF0261"/>
    <property type="match status" value="1"/>
</dbReference>
<dbReference type="InterPro" id="IPR051353">
    <property type="entry name" value="Tobamovirus_resist_UPF0261"/>
</dbReference>
<dbReference type="InterPro" id="IPR008322">
    <property type="entry name" value="UPF0261"/>
</dbReference>
<dbReference type="InterPro" id="IPR056778">
    <property type="entry name" value="UPF0261_C"/>
</dbReference>
<dbReference type="InterPro" id="IPR044122">
    <property type="entry name" value="UPF0261_N"/>
</dbReference>
<dbReference type="NCBIfam" id="NF002673">
    <property type="entry name" value="PRK02399.1-1"/>
    <property type="match status" value="1"/>
</dbReference>
<dbReference type="NCBIfam" id="NF002674">
    <property type="entry name" value="PRK02399.1-2"/>
    <property type="match status" value="1"/>
</dbReference>
<dbReference type="NCBIfam" id="NF002675">
    <property type="entry name" value="PRK02399.1-3"/>
    <property type="match status" value="1"/>
</dbReference>
<dbReference type="PANTHER" id="PTHR31862">
    <property type="entry name" value="UPF0261 DOMAIN PROTEIN (AFU_ORTHOLOGUE AFUA_1G10120)"/>
    <property type="match status" value="1"/>
</dbReference>
<dbReference type="PANTHER" id="PTHR31862:SF1">
    <property type="entry name" value="UPF0261 DOMAIN PROTEIN (AFU_ORTHOLOGUE AFUA_1G10120)"/>
    <property type="match status" value="1"/>
</dbReference>
<dbReference type="Pfam" id="PF06792">
    <property type="entry name" value="UPF0261"/>
    <property type="match status" value="1"/>
</dbReference>
<dbReference type="Pfam" id="PF23189">
    <property type="entry name" value="UPF0261_C"/>
    <property type="match status" value="1"/>
</dbReference>
<dbReference type="PIRSF" id="PIRSF033271">
    <property type="entry name" value="UCP033271"/>
    <property type="match status" value="1"/>
</dbReference>
<organism>
    <name type="scientific">Mesorhizobium japonicum (strain LMG 29417 / CECT 9101 / MAFF 303099)</name>
    <name type="common">Mesorhizobium loti (strain MAFF 303099)</name>
    <dbReference type="NCBI Taxonomy" id="266835"/>
    <lineage>
        <taxon>Bacteria</taxon>
        <taxon>Pseudomonadati</taxon>
        <taxon>Pseudomonadota</taxon>
        <taxon>Alphaproteobacteria</taxon>
        <taxon>Hyphomicrobiales</taxon>
        <taxon>Phyllobacteriaceae</taxon>
        <taxon>Mesorhizobium</taxon>
    </lineage>
</organism>
<evidence type="ECO:0000255" key="1">
    <source>
        <dbReference type="HAMAP-Rule" id="MF_00677"/>
    </source>
</evidence>
<gene>
    <name type="ordered locus">mlr3387</name>
</gene>
<accession>Q98GC6</accession>